<organism>
    <name type="scientific">Rattus norvegicus</name>
    <name type="common">Rat</name>
    <dbReference type="NCBI Taxonomy" id="10116"/>
    <lineage>
        <taxon>Eukaryota</taxon>
        <taxon>Metazoa</taxon>
        <taxon>Chordata</taxon>
        <taxon>Craniata</taxon>
        <taxon>Vertebrata</taxon>
        <taxon>Euteleostomi</taxon>
        <taxon>Mammalia</taxon>
        <taxon>Eutheria</taxon>
        <taxon>Euarchontoglires</taxon>
        <taxon>Glires</taxon>
        <taxon>Rodentia</taxon>
        <taxon>Myomorpha</taxon>
        <taxon>Muroidea</taxon>
        <taxon>Muridae</taxon>
        <taxon>Murinae</taxon>
        <taxon>Rattus</taxon>
    </lineage>
</organism>
<keyword id="KW-0007">Acetylation</keyword>
<keyword id="KW-0024">Alternative initiation</keyword>
<keyword id="KW-0158">Chromosome</keyword>
<keyword id="KW-0963">Cytoplasm</keyword>
<keyword id="KW-0903">Direct protein sequencing</keyword>
<keyword id="KW-0227">DNA damage</keyword>
<keyword id="KW-0234">DNA repair</keyword>
<keyword id="KW-0456">Lyase</keyword>
<keyword id="KW-0496">Mitochondrion</keyword>
<keyword id="KW-0539">Nucleus</keyword>
<keyword id="KW-0597">Phosphoprotein</keyword>
<keyword id="KW-1185">Reference proteome</keyword>
<keyword id="KW-0809">Transit peptide</keyword>
<keyword id="KW-0816">Tricarboxylic acid cycle</keyword>
<accession>P14408</accession>
<accession>Q5M964</accession>
<gene>
    <name evidence="11" type="primary">Fh</name>
    <name evidence="4" type="synonym">Fh1</name>
</gene>
<evidence type="ECO:0000250" key="1">
    <source>
        <dbReference type="UniProtKB" id="P05042"/>
    </source>
</evidence>
<evidence type="ECO:0000250" key="2">
    <source>
        <dbReference type="UniProtKB" id="P07954"/>
    </source>
</evidence>
<evidence type="ECO:0000250" key="3">
    <source>
        <dbReference type="UniProtKB" id="P10173"/>
    </source>
</evidence>
<evidence type="ECO:0000250" key="4">
    <source>
        <dbReference type="UniProtKB" id="P97807"/>
    </source>
</evidence>
<evidence type="ECO:0000250" key="5">
    <source>
        <dbReference type="UniProtKB" id="P9WN93"/>
    </source>
</evidence>
<evidence type="ECO:0000269" key="6">
    <source>
    </source>
</evidence>
<evidence type="ECO:0000303" key="7">
    <source>
    </source>
</evidence>
<evidence type="ECO:0000305" key="8"/>
<evidence type="ECO:0000312" key="9">
    <source>
        <dbReference type="EMBL" id="AAH87598.1"/>
    </source>
</evidence>
<evidence type="ECO:0000312" key="10">
    <source>
        <dbReference type="EMBL" id="EDL94769.1"/>
    </source>
</evidence>
<evidence type="ECO:0000312" key="11">
    <source>
        <dbReference type="RGD" id="2614"/>
    </source>
</evidence>
<comment type="function">
    <text evidence="2 8">Catalyzes the reversible stereospecific interconversion of fumarate to L-malate (By similarity). Experiments in other species have demonstrated that specific isoforms of this protein act in defined pathways and favor one direction over the other (Probable).</text>
</comment>
<comment type="function">
    <molecule>Isoform Mitochondrial</molecule>
    <text evidence="3">Catalyzes the hydration of fumarate to L-malate in the tricarboxylic acid (TCA) cycle to facilitate a transition step in the production of energy in the form of NADH.</text>
</comment>
<comment type="function">
    <molecule>Isoform Cytoplasmic</molecule>
    <text evidence="2 4">Catalyzes the dehydration of L-malate to fumarate. Fumarate metabolism in the cytosol plays a role during urea cycle and arginine metabolism; fumarate being a by-product of the urea cycle and amino-acid catabolism (By similarity). Also plays a role in DNA repair by promoting non-homologous end-joining (NHEJ). In response to DNA damage and phosphorylation by PRKDC, translocates to the nucleus and accumulates at DNA double-strand breaks (DSBs): acts by catalyzing formation of fumarate, an inhibitor of KDM2B histone demethylase activity, resulting in enhanced dimethylation of histone H3 'Lys-36' (H3K36me2) (By similarity).</text>
</comment>
<comment type="catalytic activity">
    <molecule>Isoform Mitochondrial</molecule>
    <reaction evidence="3">
        <text>(S)-malate = fumarate + H2O</text>
        <dbReference type="Rhea" id="RHEA:12460"/>
        <dbReference type="ChEBI" id="CHEBI:15377"/>
        <dbReference type="ChEBI" id="CHEBI:15589"/>
        <dbReference type="ChEBI" id="CHEBI:29806"/>
        <dbReference type="EC" id="4.2.1.2"/>
    </reaction>
    <physiologicalReaction direction="right-to-left" evidence="3">
        <dbReference type="Rhea" id="RHEA:12462"/>
    </physiologicalReaction>
</comment>
<comment type="catalytic activity">
    <molecule>Isoform Cytoplasmic</molecule>
    <reaction evidence="4">
        <text>(S)-malate = fumarate + H2O</text>
        <dbReference type="Rhea" id="RHEA:12460"/>
        <dbReference type="ChEBI" id="CHEBI:15377"/>
        <dbReference type="ChEBI" id="CHEBI:15589"/>
        <dbReference type="ChEBI" id="CHEBI:29806"/>
        <dbReference type="EC" id="4.2.1.2"/>
    </reaction>
    <physiologicalReaction direction="left-to-right" evidence="4">
        <dbReference type="Rhea" id="RHEA:12461"/>
    </physiologicalReaction>
</comment>
<comment type="pathway">
    <text evidence="3">Carbohydrate metabolism; tricarboxylic acid cycle; (S)-malate from fumarate: step 1/1.</text>
</comment>
<comment type="subunit">
    <text evidence="2">Homotetramer. Interacts with H2AZ1.</text>
</comment>
<comment type="subcellular location">
    <molecule>Isoform Mitochondrial</molecule>
    <subcellularLocation>
        <location evidence="6">Mitochondrion</location>
    </subcellularLocation>
</comment>
<comment type="subcellular location">
    <molecule>Isoform Cytoplasmic</molecule>
    <subcellularLocation>
        <location evidence="6">Cytoplasm</location>
        <location evidence="6">Cytosol</location>
    </subcellularLocation>
    <subcellularLocation>
        <location evidence="2">Nucleus</location>
    </subcellularLocation>
    <subcellularLocation>
        <location evidence="2">Chromosome</location>
    </subcellularLocation>
    <text evidence="2">Translocates to the nucleus in response to DNA damage: localizes to DNA double-strand breaks (DSBs) following phosphorylation by PRKDC.</text>
</comment>
<comment type="alternative products">
    <event type="alternative initiation"/>
    <isoform>
        <id>P14408-1</id>
        <name evidence="7">Mitochondrial</name>
        <sequence type="displayed"/>
    </isoform>
    <isoform>
        <id>P14408-2</id>
        <name evidence="7">Cytoplasmic</name>
        <sequence type="described" ref="VSP_018968"/>
    </isoform>
</comment>
<comment type="PTM">
    <molecule>Isoform Cytoplasmic</molecule>
    <text evidence="2">Phosphorylation at Thr-233 by PRKDC in response to DNA damage promotes translocation to the nucleus and recruitment to DNA double-strand breaks (DSBs).</text>
</comment>
<comment type="miscellaneous">
    <text evidence="1 5">There are 2 substrate-binding sites: the catalytic A site, and the non-catalytic B site that may play a role in the transfer of substrate or product between the active site and the solvent. Alternatively, the B site may bind allosteric effectors.</text>
</comment>
<comment type="similarity">
    <text evidence="8">Belongs to the class-II fumarase/aspartase family. Fumarase subfamily.</text>
</comment>
<feature type="transit peptide" description="Mitochondrion" evidence="6">
    <location>
        <begin position="1"/>
        <end position="41"/>
    </location>
</feature>
<feature type="chain" id="PRO_0000010325" description="Fumarate hydratase, mitochondrial">
    <location>
        <begin position="42"/>
        <end position="507"/>
    </location>
</feature>
<feature type="active site" description="Proton donor/acceptor" evidence="1">
    <location>
        <position position="232"/>
    </location>
</feature>
<feature type="active site" evidence="5">
    <location>
        <position position="362"/>
    </location>
</feature>
<feature type="binding site" evidence="1">
    <location>
        <begin position="142"/>
        <end position="144"/>
    </location>
    <ligand>
        <name>substrate</name>
    </ligand>
</feature>
<feature type="binding site" description="in site B" evidence="1">
    <location>
        <begin position="173"/>
        <end position="176"/>
    </location>
    <ligand>
        <name>substrate</name>
    </ligand>
</feature>
<feature type="binding site" evidence="1">
    <location>
        <begin position="183"/>
        <end position="185"/>
    </location>
    <ligand>
        <name>substrate</name>
    </ligand>
</feature>
<feature type="binding site" evidence="5">
    <location>
        <position position="231"/>
    </location>
    <ligand>
        <name>substrate</name>
    </ligand>
</feature>
<feature type="binding site" evidence="5">
    <location>
        <position position="363"/>
    </location>
    <ligand>
        <name>substrate</name>
    </ligand>
</feature>
<feature type="binding site" evidence="5">
    <location>
        <begin position="368"/>
        <end position="370"/>
    </location>
    <ligand>
        <name>substrate</name>
    </ligand>
</feature>
<feature type="site" description="Important for catalytic activity" evidence="1">
    <location>
        <position position="375"/>
    </location>
</feature>
<feature type="modified residue" description="N6-acetyllysine; alternate" evidence="4">
    <location>
        <position position="58"/>
    </location>
</feature>
<feature type="modified residue" description="N6-succinyllysine; alternate" evidence="4">
    <location>
        <position position="58"/>
    </location>
</feature>
<feature type="modified residue" description="N6-acetyllysine; alternate" evidence="2">
    <location>
        <position position="63"/>
    </location>
</feature>
<feature type="modified residue" description="N6-succinyllysine; alternate" evidence="4">
    <location>
        <position position="63"/>
    </location>
</feature>
<feature type="modified residue" description="N6-acetyllysine; alternate" evidence="2">
    <location>
        <position position="77"/>
    </location>
</feature>
<feature type="modified residue" description="N6-succinyllysine; alternate" evidence="4">
    <location>
        <position position="77"/>
    </location>
</feature>
<feature type="modified residue" description="Phosphothreonine" evidence="4">
    <location>
        <position position="82"/>
    </location>
</feature>
<feature type="modified residue" description="N6-acetyllysine" evidence="2">
    <location>
        <position position="91"/>
    </location>
</feature>
<feature type="modified residue" description="N6-acetyllysine; alternate" evidence="4">
    <location>
        <position position="112"/>
    </location>
</feature>
<feature type="modified residue" description="N6-succinyllysine; alternate" evidence="4">
    <location>
        <position position="112"/>
    </location>
</feature>
<feature type="modified residue" description="N6-acetyllysine; alternate" evidence="4">
    <location>
        <position position="119"/>
    </location>
</feature>
<feature type="modified residue" description="N6-succinyllysine; alternate" evidence="4">
    <location>
        <position position="119"/>
    </location>
</feature>
<feature type="modified residue" description="N6-acetyllysine" evidence="4">
    <location>
        <position position="210"/>
    </location>
</feature>
<feature type="modified residue" description="N6-acetyllysine; alternate" evidence="4">
    <location>
        <position position="220"/>
    </location>
</feature>
<feature type="modified residue" description="N6-succinyllysine; alternate" evidence="4">
    <location>
        <position position="220"/>
    </location>
</feature>
<feature type="modified residue" description="Phosphothreonine" evidence="2">
    <location>
        <position position="233"/>
    </location>
</feature>
<feature type="modified residue" description="N6-acetyllysine; alternate" evidence="2">
    <location>
        <position position="289"/>
    </location>
</feature>
<feature type="modified residue" description="N6-succinyllysine; alternate" evidence="4">
    <location>
        <position position="289"/>
    </location>
</feature>
<feature type="modified residue" description="Phosphoserine" evidence="2">
    <location>
        <position position="363"/>
    </location>
</feature>
<feature type="modified residue" description="N6-succinyllysine" evidence="4">
    <location>
        <position position="464"/>
    </location>
</feature>
<feature type="modified residue" description="N6-succinyllysine" evidence="4">
    <location>
        <position position="470"/>
    </location>
</feature>
<feature type="modified residue" description="N6-acetyllysine" evidence="4">
    <location>
        <position position="499"/>
    </location>
</feature>
<feature type="splice variant" id="VSP_018968" description="In isoform Cytoplasmic." evidence="8">
    <location>
        <begin position="1"/>
        <end position="40"/>
    </location>
</feature>
<feature type="sequence conflict" description="In Ref. 1; AAA41177." evidence="8" ref="1">
    <original>E</original>
    <variation>K</variation>
    <location>
        <position position="481"/>
    </location>
</feature>
<feature type="initiator methionine" description="Removed" evidence="2">
    <location sequence="P14408-2">
        <position position="1"/>
    </location>
</feature>
<dbReference type="EC" id="4.2.1.2" evidence="2"/>
<dbReference type="EMBL" id="J04473">
    <property type="protein sequence ID" value="AAA41177.1"/>
    <property type="molecule type" value="mRNA"/>
</dbReference>
<dbReference type="EMBL" id="AC109958">
    <property type="status" value="NOT_ANNOTATED_CDS"/>
    <property type="molecule type" value="Genomic_DNA"/>
</dbReference>
<dbReference type="EMBL" id="BC087598">
    <property type="protein sequence ID" value="AAH87598.1"/>
    <property type="molecule type" value="mRNA"/>
</dbReference>
<dbReference type="EMBL" id="AC119639">
    <property type="status" value="NOT_ANNOTATED_CDS"/>
    <property type="molecule type" value="Genomic_DNA"/>
</dbReference>
<dbReference type="EMBL" id="CH473985">
    <property type="protein sequence ID" value="EDL94769.1"/>
    <property type="molecule type" value="Genomic_DNA"/>
</dbReference>
<dbReference type="PIR" id="A31424">
    <property type="entry name" value="UFRT"/>
</dbReference>
<dbReference type="RefSeq" id="NP_058701.2">
    <molecule id="P14408-1"/>
    <property type="nucleotide sequence ID" value="NM_017005.2"/>
</dbReference>
<dbReference type="SMR" id="P14408"/>
<dbReference type="FunCoup" id="P14408">
    <property type="interactions" value="1684"/>
</dbReference>
<dbReference type="IntAct" id="P14408">
    <property type="interactions" value="2"/>
</dbReference>
<dbReference type="STRING" id="10116.ENSRNOP00000004917"/>
<dbReference type="GlyGen" id="P14408">
    <property type="glycosylation" value="1 site"/>
</dbReference>
<dbReference type="iPTMnet" id="P14408"/>
<dbReference type="PhosphoSitePlus" id="P14408"/>
<dbReference type="jPOST" id="P14408"/>
<dbReference type="PaxDb" id="10116-ENSRNOP00000004917"/>
<dbReference type="PeptideAtlas" id="P14408"/>
<dbReference type="Ensembl" id="ENSRNOT00000004917.6">
    <molecule id="P14408-1"/>
    <property type="protein sequence ID" value="ENSRNOP00000004917.3"/>
    <property type="gene ID" value="ENSRNOG00000003653.6"/>
</dbReference>
<dbReference type="GeneID" id="24368"/>
<dbReference type="KEGG" id="rno:24368"/>
<dbReference type="UCSC" id="RGD:2614">
    <molecule id="P14408-1"/>
    <property type="organism name" value="rat"/>
</dbReference>
<dbReference type="AGR" id="RGD:2614"/>
<dbReference type="CTD" id="2271"/>
<dbReference type="RGD" id="2614">
    <property type="gene designation" value="Fh"/>
</dbReference>
<dbReference type="eggNOG" id="KOG1317">
    <property type="taxonomic scope" value="Eukaryota"/>
</dbReference>
<dbReference type="GeneTree" id="ENSGT00950000183122"/>
<dbReference type="HOGENOM" id="CLU_021594_4_1_1"/>
<dbReference type="InParanoid" id="P14408"/>
<dbReference type="OMA" id="AKWRAQT"/>
<dbReference type="OrthoDB" id="46588at9989"/>
<dbReference type="PhylomeDB" id="P14408"/>
<dbReference type="TreeFam" id="TF300441"/>
<dbReference type="BRENDA" id="4.2.1.2">
    <property type="organism ID" value="5301"/>
</dbReference>
<dbReference type="Reactome" id="R-RNO-71403">
    <property type="pathway name" value="Citric acid cycle (TCA cycle)"/>
</dbReference>
<dbReference type="Reactome" id="R-RNO-9837999">
    <property type="pathway name" value="Mitochondrial protein degradation"/>
</dbReference>
<dbReference type="SABIO-RK" id="P14408"/>
<dbReference type="UniPathway" id="UPA00223">
    <property type="reaction ID" value="UER01007"/>
</dbReference>
<dbReference type="PRO" id="PR:P14408"/>
<dbReference type="Proteomes" id="UP000002494">
    <property type="component" value="Chromosome 13"/>
</dbReference>
<dbReference type="Proteomes" id="UP000234681">
    <property type="component" value="Chromosome 13"/>
</dbReference>
<dbReference type="Bgee" id="ENSRNOG00000003653">
    <property type="expression patterns" value="Expressed in heart and 20 other cell types or tissues"/>
</dbReference>
<dbReference type="GO" id="GO:0005694">
    <property type="term" value="C:chromosome"/>
    <property type="evidence" value="ECO:0007669"/>
    <property type="project" value="UniProtKB-SubCell"/>
</dbReference>
<dbReference type="GO" id="GO:0005829">
    <property type="term" value="C:cytosol"/>
    <property type="evidence" value="ECO:0000266"/>
    <property type="project" value="RGD"/>
</dbReference>
<dbReference type="GO" id="GO:0005759">
    <property type="term" value="C:mitochondrial matrix"/>
    <property type="evidence" value="ECO:0000266"/>
    <property type="project" value="RGD"/>
</dbReference>
<dbReference type="GO" id="GO:0005739">
    <property type="term" value="C:mitochondrion"/>
    <property type="evidence" value="ECO:0000318"/>
    <property type="project" value="GO_Central"/>
</dbReference>
<dbReference type="GO" id="GO:0005634">
    <property type="term" value="C:nucleus"/>
    <property type="evidence" value="ECO:0007669"/>
    <property type="project" value="UniProtKB-SubCell"/>
</dbReference>
<dbReference type="GO" id="GO:0004333">
    <property type="term" value="F:fumarate hydratase activity"/>
    <property type="evidence" value="ECO:0000315"/>
    <property type="project" value="RGD"/>
</dbReference>
<dbReference type="GO" id="GO:0006525">
    <property type="term" value="P:arginine metabolic process"/>
    <property type="evidence" value="ECO:0000266"/>
    <property type="project" value="RGD"/>
</dbReference>
<dbReference type="GO" id="GO:0006974">
    <property type="term" value="P:DNA damage response"/>
    <property type="evidence" value="ECO:0000250"/>
    <property type="project" value="UniProtKB"/>
</dbReference>
<dbReference type="GO" id="GO:0006281">
    <property type="term" value="P:DNA repair"/>
    <property type="evidence" value="ECO:0007669"/>
    <property type="project" value="UniProtKB-KW"/>
</dbReference>
<dbReference type="GO" id="GO:0006106">
    <property type="term" value="P:fumarate metabolic process"/>
    <property type="evidence" value="ECO:0000250"/>
    <property type="project" value="UniProtKB"/>
</dbReference>
<dbReference type="GO" id="GO:0048873">
    <property type="term" value="P:homeostasis of number of cells within a tissue"/>
    <property type="evidence" value="ECO:0000266"/>
    <property type="project" value="RGD"/>
</dbReference>
<dbReference type="GO" id="GO:0006108">
    <property type="term" value="P:malate metabolic process"/>
    <property type="evidence" value="ECO:0000266"/>
    <property type="project" value="RGD"/>
</dbReference>
<dbReference type="GO" id="GO:0120162">
    <property type="term" value="P:positive regulation of cold-induced thermogenesis"/>
    <property type="evidence" value="ECO:0000250"/>
    <property type="project" value="YuBioLab"/>
</dbReference>
<dbReference type="GO" id="GO:2001034">
    <property type="term" value="P:positive regulation of double-strand break repair via nonhomologous end joining"/>
    <property type="evidence" value="ECO:0000250"/>
    <property type="project" value="UniProtKB"/>
</dbReference>
<dbReference type="GO" id="GO:0000821">
    <property type="term" value="P:regulation of arginine metabolic process"/>
    <property type="evidence" value="ECO:0000250"/>
    <property type="project" value="UniProtKB"/>
</dbReference>
<dbReference type="GO" id="GO:0006099">
    <property type="term" value="P:tricarboxylic acid cycle"/>
    <property type="evidence" value="ECO:0000266"/>
    <property type="project" value="RGD"/>
</dbReference>
<dbReference type="GO" id="GO:0000050">
    <property type="term" value="P:urea cycle"/>
    <property type="evidence" value="ECO:0000250"/>
    <property type="project" value="UniProtKB"/>
</dbReference>
<dbReference type="CDD" id="cd01362">
    <property type="entry name" value="Fumarase_classII"/>
    <property type="match status" value="1"/>
</dbReference>
<dbReference type="FunFam" id="1.10.40.30:FF:000002">
    <property type="entry name" value="Fumarate hydratase class II"/>
    <property type="match status" value="1"/>
</dbReference>
<dbReference type="FunFam" id="1.10.275.10:FF:000001">
    <property type="entry name" value="Fumarate hydratase, mitochondrial"/>
    <property type="match status" value="1"/>
</dbReference>
<dbReference type="FunFam" id="1.20.200.10:FF:000001">
    <property type="entry name" value="Fumarate hydratase, mitochondrial"/>
    <property type="match status" value="1"/>
</dbReference>
<dbReference type="Gene3D" id="1.10.40.30">
    <property type="entry name" value="Fumarase/aspartase (C-terminal domain)"/>
    <property type="match status" value="1"/>
</dbReference>
<dbReference type="Gene3D" id="1.20.200.10">
    <property type="entry name" value="Fumarase/aspartase (Central domain)"/>
    <property type="match status" value="1"/>
</dbReference>
<dbReference type="Gene3D" id="1.10.275.10">
    <property type="entry name" value="Fumarase/aspartase (N-terminal domain)"/>
    <property type="match status" value="1"/>
</dbReference>
<dbReference type="HAMAP" id="MF_00743">
    <property type="entry name" value="FumaraseC"/>
    <property type="match status" value="1"/>
</dbReference>
<dbReference type="InterPro" id="IPR005677">
    <property type="entry name" value="Fum_hydII"/>
</dbReference>
<dbReference type="InterPro" id="IPR024083">
    <property type="entry name" value="Fumarase/histidase_N"/>
</dbReference>
<dbReference type="InterPro" id="IPR018951">
    <property type="entry name" value="Fumarase_C_C"/>
</dbReference>
<dbReference type="InterPro" id="IPR020557">
    <property type="entry name" value="Fumarate_lyase_CS"/>
</dbReference>
<dbReference type="InterPro" id="IPR000362">
    <property type="entry name" value="Fumarate_lyase_fam"/>
</dbReference>
<dbReference type="InterPro" id="IPR022761">
    <property type="entry name" value="Fumarate_lyase_N"/>
</dbReference>
<dbReference type="InterPro" id="IPR008948">
    <property type="entry name" value="L-Aspartase-like"/>
</dbReference>
<dbReference type="NCBIfam" id="TIGR00979">
    <property type="entry name" value="fumC_II"/>
    <property type="match status" value="1"/>
</dbReference>
<dbReference type="NCBIfam" id="NF008909">
    <property type="entry name" value="PRK12273.1"/>
    <property type="match status" value="1"/>
</dbReference>
<dbReference type="PANTHER" id="PTHR11444">
    <property type="entry name" value="ASPARTATEAMMONIA/ARGININOSUCCINATE/ADENYLOSUCCINATE LYASE"/>
    <property type="match status" value="1"/>
</dbReference>
<dbReference type="PANTHER" id="PTHR11444:SF1">
    <property type="entry name" value="FUMARATE HYDRATASE, MITOCHONDRIAL"/>
    <property type="match status" value="1"/>
</dbReference>
<dbReference type="Pfam" id="PF10415">
    <property type="entry name" value="FumaraseC_C"/>
    <property type="match status" value="1"/>
</dbReference>
<dbReference type="Pfam" id="PF00206">
    <property type="entry name" value="Lyase_1"/>
    <property type="match status" value="1"/>
</dbReference>
<dbReference type="PRINTS" id="PR00149">
    <property type="entry name" value="FUMRATELYASE"/>
</dbReference>
<dbReference type="SUPFAM" id="SSF48557">
    <property type="entry name" value="L-aspartase-like"/>
    <property type="match status" value="1"/>
</dbReference>
<dbReference type="PROSITE" id="PS00163">
    <property type="entry name" value="FUMARATE_LYASES"/>
    <property type="match status" value="1"/>
</dbReference>
<protein>
    <recommendedName>
        <fullName evidence="2">Fumarate hydratase, mitochondrial</fullName>
        <shortName evidence="7">Fumarase</shortName>
        <ecNumber evidence="2">4.2.1.2</ecNumber>
    </recommendedName>
</protein>
<name>FUMH_RAT</name>
<reference key="1">
    <citation type="journal article" date="1989" name="J. Biol. Chem.">
        <title>Rat liver mitochondrial and cytosolic fumarases with identical amino acid sequences are encoded from a single gene.</title>
        <authorList>
            <person name="Suzuki T."/>
            <person name="Sato M."/>
            <person name="Yoshida T."/>
            <person name="Tuboi S."/>
        </authorList>
    </citation>
    <scope>NUCLEOTIDE SEQUENCE [MRNA] (ISOFORMS MITOCHONDRIAL AND CYTOPLASMIC)</scope>
    <scope>PARTIAL PROTEIN SEQUENCE</scope>
    <scope>SUBCELLULAR LOCATION</scope>
    <source>
        <tissue>Liver</tissue>
    </source>
</reference>
<reference key="2">
    <citation type="journal article" date="2004" name="Nature">
        <title>Genome sequence of the Brown Norway rat yields insights into mammalian evolution.</title>
        <authorList>
            <person name="Gibbs R.A."/>
            <person name="Weinstock G.M."/>
            <person name="Metzker M.L."/>
            <person name="Muzny D.M."/>
            <person name="Sodergren E.J."/>
            <person name="Scherer S."/>
            <person name="Scott G."/>
            <person name="Steffen D."/>
            <person name="Worley K.C."/>
            <person name="Burch P.E."/>
            <person name="Okwuonu G."/>
            <person name="Hines S."/>
            <person name="Lewis L."/>
            <person name="Deramo C."/>
            <person name="Delgado O."/>
            <person name="Dugan-Rocha S."/>
            <person name="Miner G."/>
            <person name="Morgan M."/>
            <person name="Hawes A."/>
            <person name="Gill R."/>
            <person name="Holt R.A."/>
            <person name="Adams M.D."/>
            <person name="Amanatides P.G."/>
            <person name="Baden-Tillson H."/>
            <person name="Barnstead M."/>
            <person name="Chin S."/>
            <person name="Evans C.A."/>
            <person name="Ferriera S."/>
            <person name="Fosler C."/>
            <person name="Glodek A."/>
            <person name="Gu Z."/>
            <person name="Jennings D."/>
            <person name="Kraft C.L."/>
            <person name="Nguyen T."/>
            <person name="Pfannkoch C.M."/>
            <person name="Sitter C."/>
            <person name="Sutton G.G."/>
            <person name="Venter J.C."/>
            <person name="Woodage T."/>
            <person name="Smith D."/>
            <person name="Lee H.-M."/>
            <person name="Gustafson E."/>
            <person name="Cahill P."/>
            <person name="Kana A."/>
            <person name="Doucette-Stamm L."/>
            <person name="Weinstock K."/>
            <person name="Fechtel K."/>
            <person name="Weiss R.B."/>
            <person name="Dunn D.M."/>
            <person name="Green E.D."/>
            <person name="Blakesley R.W."/>
            <person name="Bouffard G.G."/>
            <person name="De Jong P.J."/>
            <person name="Osoegawa K."/>
            <person name="Zhu B."/>
            <person name="Marra M."/>
            <person name="Schein J."/>
            <person name="Bosdet I."/>
            <person name="Fjell C."/>
            <person name="Jones S."/>
            <person name="Krzywinski M."/>
            <person name="Mathewson C."/>
            <person name="Siddiqui A."/>
            <person name="Wye N."/>
            <person name="McPherson J."/>
            <person name="Zhao S."/>
            <person name="Fraser C.M."/>
            <person name="Shetty J."/>
            <person name="Shatsman S."/>
            <person name="Geer K."/>
            <person name="Chen Y."/>
            <person name="Abramzon S."/>
            <person name="Nierman W.C."/>
            <person name="Havlak P.H."/>
            <person name="Chen R."/>
            <person name="Durbin K.J."/>
            <person name="Egan A."/>
            <person name="Ren Y."/>
            <person name="Song X.-Z."/>
            <person name="Li B."/>
            <person name="Liu Y."/>
            <person name="Qin X."/>
            <person name="Cawley S."/>
            <person name="Cooney A.J."/>
            <person name="D'Souza L.M."/>
            <person name="Martin K."/>
            <person name="Wu J.Q."/>
            <person name="Gonzalez-Garay M.L."/>
            <person name="Jackson A.R."/>
            <person name="Kalafus K.J."/>
            <person name="McLeod M.P."/>
            <person name="Milosavljevic A."/>
            <person name="Virk D."/>
            <person name="Volkov A."/>
            <person name="Wheeler D.A."/>
            <person name="Zhang Z."/>
            <person name="Bailey J.A."/>
            <person name="Eichler E.E."/>
            <person name="Tuzun E."/>
            <person name="Birney E."/>
            <person name="Mongin E."/>
            <person name="Ureta-Vidal A."/>
            <person name="Woodwark C."/>
            <person name="Zdobnov E."/>
            <person name="Bork P."/>
            <person name="Suyama M."/>
            <person name="Torrents D."/>
            <person name="Alexandersson M."/>
            <person name="Trask B.J."/>
            <person name="Young J.M."/>
            <person name="Huang H."/>
            <person name="Wang H."/>
            <person name="Xing H."/>
            <person name="Daniels S."/>
            <person name="Gietzen D."/>
            <person name="Schmidt J."/>
            <person name="Stevens K."/>
            <person name="Vitt U."/>
            <person name="Wingrove J."/>
            <person name="Camara F."/>
            <person name="Mar Alba M."/>
            <person name="Abril J.F."/>
            <person name="Guigo R."/>
            <person name="Smit A."/>
            <person name="Dubchak I."/>
            <person name="Rubin E.M."/>
            <person name="Couronne O."/>
            <person name="Poliakov A."/>
            <person name="Huebner N."/>
            <person name="Ganten D."/>
            <person name="Goesele C."/>
            <person name="Hummel O."/>
            <person name="Kreitler T."/>
            <person name="Lee Y.-A."/>
            <person name="Monti J."/>
            <person name="Schulz H."/>
            <person name="Zimdahl H."/>
            <person name="Himmelbauer H."/>
            <person name="Lehrach H."/>
            <person name="Jacob H.J."/>
            <person name="Bromberg S."/>
            <person name="Gullings-Handley J."/>
            <person name="Jensen-Seaman M.I."/>
            <person name="Kwitek A.E."/>
            <person name="Lazar J."/>
            <person name="Pasko D."/>
            <person name="Tonellato P.J."/>
            <person name="Twigger S."/>
            <person name="Ponting C.P."/>
            <person name="Duarte J.M."/>
            <person name="Rice S."/>
            <person name="Goodstadt L."/>
            <person name="Beatson S.A."/>
            <person name="Emes R.D."/>
            <person name="Winter E.E."/>
            <person name="Webber C."/>
            <person name="Brandt P."/>
            <person name="Nyakatura G."/>
            <person name="Adetobi M."/>
            <person name="Chiaromonte F."/>
            <person name="Elnitski L."/>
            <person name="Eswara P."/>
            <person name="Hardison R.C."/>
            <person name="Hou M."/>
            <person name="Kolbe D."/>
            <person name="Makova K."/>
            <person name="Miller W."/>
            <person name="Nekrutenko A."/>
            <person name="Riemer C."/>
            <person name="Schwartz S."/>
            <person name="Taylor J."/>
            <person name="Yang S."/>
            <person name="Zhang Y."/>
            <person name="Lindpaintner K."/>
            <person name="Andrews T.D."/>
            <person name="Caccamo M."/>
            <person name="Clamp M."/>
            <person name="Clarke L."/>
            <person name="Curwen V."/>
            <person name="Durbin R.M."/>
            <person name="Eyras E."/>
            <person name="Searle S.M."/>
            <person name="Cooper G.M."/>
            <person name="Batzoglou S."/>
            <person name="Brudno M."/>
            <person name="Sidow A."/>
            <person name="Stone E.A."/>
            <person name="Payseur B.A."/>
            <person name="Bourque G."/>
            <person name="Lopez-Otin C."/>
            <person name="Puente X.S."/>
            <person name="Chakrabarti K."/>
            <person name="Chatterji S."/>
            <person name="Dewey C."/>
            <person name="Pachter L."/>
            <person name="Bray N."/>
            <person name="Yap V.B."/>
            <person name="Caspi A."/>
            <person name="Tesler G."/>
            <person name="Pevzner P.A."/>
            <person name="Haussler D."/>
            <person name="Roskin K.M."/>
            <person name="Baertsch R."/>
            <person name="Clawson H."/>
            <person name="Furey T.S."/>
            <person name="Hinrichs A.S."/>
            <person name="Karolchik D."/>
            <person name="Kent W.J."/>
            <person name="Rosenbloom K.R."/>
            <person name="Trumbower H."/>
            <person name="Weirauch M."/>
            <person name="Cooper D.N."/>
            <person name="Stenson P.D."/>
            <person name="Ma B."/>
            <person name="Brent M."/>
            <person name="Arumugam M."/>
            <person name="Shteynberg D."/>
            <person name="Copley R.R."/>
            <person name="Taylor M.S."/>
            <person name="Riethman H."/>
            <person name="Mudunuri U."/>
            <person name="Peterson J."/>
            <person name="Guyer M."/>
            <person name="Felsenfeld A."/>
            <person name="Old S."/>
            <person name="Mockrin S."/>
            <person name="Collins F.S."/>
        </authorList>
    </citation>
    <scope>NUCLEOTIDE SEQUENCE [LARGE SCALE GENOMIC DNA]</scope>
    <source>
        <strain>Brown Norway</strain>
    </source>
</reference>
<reference key="3">
    <citation type="submission" date="2005-07" db="EMBL/GenBank/DDBJ databases">
        <authorList>
            <person name="Mural R.J."/>
            <person name="Adams M.D."/>
            <person name="Myers E.W."/>
            <person name="Smith H.O."/>
            <person name="Venter J.C."/>
        </authorList>
    </citation>
    <scope>NUCLEOTIDE SEQUENCE [LARGE SCALE GENOMIC DNA]</scope>
    <source>
        <strain evidence="10">Brown Norway</strain>
    </source>
</reference>
<reference key="4">
    <citation type="journal article" date="2004" name="Genome Res.">
        <title>The status, quality, and expansion of the NIH full-length cDNA project: the Mammalian Gene Collection (MGC).</title>
        <authorList>
            <consortium name="The MGC Project Team"/>
        </authorList>
    </citation>
    <scope>NUCLEOTIDE SEQUENCE [LARGE SCALE MRNA]</scope>
    <source>
        <tissue evidence="9">Brain</tissue>
    </source>
</reference>
<reference key="5">
    <citation type="submission" date="2007-04" db="UniProtKB">
        <authorList>
            <person name="Lubec G."/>
            <person name="Afjehi-Sadat L."/>
            <person name="Chen W.-Q."/>
        </authorList>
    </citation>
    <scope>PROTEIN SEQUENCE OF 266-283 AND 420-441</scope>
    <scope>IDENTIFICATION BY MASS SPECTROMETRY</scope>
    <source>
        <strain>Sprague-Dawley</strain>
        <tissue>Hippocampus</tissue>
        <tissue>Spinal cord</tissue>
    </source>
</reference>
<proteinExistence type="evidence at protein level"/>
<sequence>MNRAFCLLARSRRFPRVPSAGAVLSGEAATLPRCAPNVVRMASQNSFRIEYDTFGELKVPTDKYYGAQTVRSTMNFKIGGATERMPIPVIKAFGILKRAAAEVNQEYGLDPKIASAIMKAADEVAEGKLNDHFPLVVWQTGSGTQTNMNVNEVISNRAIEMLGGELGSKKPVHPNDHVNKSQSSNDTFPTAMHIAAALEVHQVLLPGLQKLHDALSAKSKEFAQVIKIGRTHTQDAVPLTLGQEFSGYVQQVQYAMERIKAAMPRIYELAAGGTAVGTGLNTRIGFAEKVAAKVAALTGLPFVTAPNKFEALAAHDALVELSGAMNTTACSLMKIANDIRFLGSGPRSGLGELILPENEPGSSIMPGKVNPTQCEAMTMVAAQVMGNHVAVTVGGSNGHFELNVFKPMMIKNVLHSARLLGDASVSFTENCVVGIQANTERINKLMNESLMLVTALNPHIGYDKAAKIAKTAHKNGSTLKETAIELGYLTAEQFDEWVKPKDMLGPK</sequence>